<comment type="similarity">
    <text evidence="1">Belongs to the UPF0502 family.</text>
</comment>
<accession>Q0T5W5</accession>
<dbReference type="EMBL" id="CP000266">
    <property type="protein sequence ID" value="ABF03300.1"/>
    <property type="molecule type" value="Genomic_DNA"/>
</dbReference>
<dbReference type="RefSeq" id="WP_000877111.1">
    <property type="nucleotide sequence ID" value="NC_008258.1"/>
</dbReference>
<dbReference type="SMR" id="Q0T5W5"/>
<dbReference type="KEGG" id="sfv:SFV_1089"/>
<dbReference type="HOGENOM" id="CLU_057831_2_0_6"/>
<dbReference type="Proteomes" id="UP000000659">
    <property type="component" value="Chromosome"/>
</dbReference>
<dbReference type="FunFam" id="1.10.10.10:FF:000196">
    <property type="entry name" value="UPF0502 protein YceH"/>
    <property type="match status" value="1"/>
</dbReference>
<dbReference type="FunFam" id="1.10.10.10:FF:000241">
    <property type="entry name" value="UPF0502 protein YceH"/>
    <property type="match status" value="1"/>
</dbReference>
<dbReference type="Gene3D" id="1.10.10.10">
    <property type="entry name" value="Winged helix-like DNA-binding domain superfamily/Winged helix DNA-binding domain"/>
    <property type="match status" value="2"/>
</dbReference>
<dbReference type="HAMAP" id="MF_01584">
    <property type="entry name" value="UPF0502"/>
    <property type="match status" value="1"/>
</dbReference>
<dbReference type="InterPro" id="IPR007432">
    <property type="entry name" value="DUF480"/>
</dbReference>
<dbReference type="InterPro" id="IPR036388">
    <property type="entry name" value="WH-like_DNA-bd_sf"/>
</dbReference>
<dbReference type="InterPro" id="IPR036390">
    <property type="entry name" value="WH_DNA-bd_sf"/>
</dbReference>
<dbReference type="NCBIfam" id="NF008413">
    <property type="entry name" value="PRK11239.1"/>
    <property type="match status" value="1"/>
</dbReference>
<dbReference type="PANTHER" id="PTHR38768">
    <property type="entry name" value="UPF0502 PROTEIN YCEH"/>
    <property type="match status" value="1"/>
</dbReference>
<dbReference type="PANTHER" id="PTHR38768:SF1">
    <property type="entry name" value="UPF0502 PROTEIN YCEH"/>
    <property type="match status" value="1"/>
</dbReference>
<dbReference type="Pfam" id="PF04337">
    <property type="entry name" value="DUF480"/>
    <property type="match status" value="1"/>
</dbReference>
<dbReference type="SUPFAM" id="SSF46785">
    <property type="entry name" value="Winged helix' DNA-binding domain"/>
    <property type="match status" value="2"/>
</dbReference>
<reference key="1">
    <citation type="journal article" date="2006" name="BMC Genomics">
        <title>Complete genome sequence of Shigella flexneri 5b and comparison with Shigella flexneri 2a.</title>
        <authorList>
            <person name="Nie H."/>
            <person name="Yang F."/>
            <person name="Zhang X."/>
            <person name="Yang J."/>
            <person name="Chen L."/>
            <person name="Wang J."/>
            <person name="Xiong Z."/>
            <person name="Peng J."/>
            <person name="Sun L."/>
            <person name="Dong J."/>
            <person name="Xue Y."/>
            <person name="Xu X."/>
            <person name="Chen S."/>
            <person name="Yao Z."/>
            <person name="Shen Y."/>
            <person name="Jin Q."/>
        </authorList>
    </citation>
    <scope>NUCLEOTIDE SEQUENCE [LARGE SCALE GENOMIC DNA]</scope>
    <source>
        <strain>8401</strain>
    </source>
</reference>
<organism>
    <name type="scientific">Shigella flexneri serotype 5b (strain 8401)</name>
    <dbReference type="NCBI Taxonomy" id="373384"/>
    <lineage>
        <taxon>Bacteria</taxon>
        <taxon>Pseudomonadati</taxon>
        <taxon>Pseudomonadota</taxon>
        <taxon>Gammaproteobacteria</taxon>
        <taxon>Enterobacterales</taxon>
        <taxon>Enterobacteriaceae</taxon>
        <taxon>Shigella</taxon>
    </lineage>
</organism>
<name>YCEH_SHIF8</name>
<evidence type="ECO:0000255" key="1">
    <source>
        <dbReference type="HAMAP-Rule" id="MF_01584"/>
    </source>
</evidence>
<keyword id="KW-0007">Acetylation</keyword>
<protein>
    <recommendedName>
        <fullName evidence="1">UPF0502 protein YceH</fullName>
    </recommendedName>
</protein>
<proteinExistence type="inferred from homology"/>
<feature type="chain" id="PRO_0000309435" description="UPF0502 protein YceH">
    <location>
        <begin position="1"/>
        <end position="215"/>
    </location>
</feature>
<feature type="modified residue" description="N6-acetyllysine" evidence="1">
    <location>
        <position position="80"/>
    </location>
</feature>
<sequence length="215" mass="24196">MKYQLTALEARVIGCLLEKQVTTPEQYPLSVNGVVTACNQKTNREPVMNLSESEVQEQLDNLVKRHYLRTVSGFGNRVTKYEQRFCNSEFGDLKLSAAEVALITTLLLRGAQTPGELRSRAARMYEFSDMAEVESTLEQLANREDGPFVVRLAREPGKRESRYMHLFSGEVEDQPAVTAMSNMVDGDLQTRVEALEIEVAELKQRLDSLLAHLGD</sequence>
<gene>
    <name evidence="1" type="primary">yceH</name>
    <name type="ordered locus">SFV_1089</name>
</gene>